<proteinExistence type="inferred from homology"/>
<sequence>MKIKTTVAALSVLSVLSFGAFAADSIDAAQAQNREAIGTVSVSGVASSPMDMREMLNKKAEEKGATAYQITEARSGDTWHATAELYK</sequence>
<reference key="1">
    <citation type="journal article" date="2002" name="Proc. Natl. Acad. Sci. U.S.A.">
        <title>Extensive mosaic structure revealed by the complete genome sequence of uropathogenic Escherichia coli.</title>
        <authorList>
            <person name="Welch R.A."/>
            <person name="Burland V."/>
            <person name="Plunkett G. III"/>
            <person name="Redford P."/>
            <person name="Roesch P."/>
            <person name="Rasko D."/>
            <person name="Buckles E.L."/>
            <person name="Liou S.-R."/>
            <person name="Boutin A."/>
            <person name="Hackett J."/>
            <person name="Stroud D."/>
            <person name="Mayhew G.F."/>
            <person name="Rose D.J."/>
            <person name="Zhou S."/>
            <person name="Schwartz D.C."/>
            <person name="Perna N.T."/>
            <person name="Mobley H.L.T."/>
            <person name="Donnenberg M.S."/>
            <person name="Blattner F.R."/>
        </authorList>
    </citation>
    <scope>NUCLEOTIDE SEQUENCE [LARGE SCALE GENOMIC DNA]</scope>
    <source>
        <strain>CFT073 / ATCC 700928 / UPEC</strain>
    </source>
</reference>
<evidence type="ECO:0000255" key="1"/>
<evidence type="ECO:0000305" key="2"/>
<name>YHCN_ECOL6</name>
<dbReference type="EMBL" id="AE014075">
    <property type="protein sequence ID" value="AAN82433.1"/>
    <property type="status" value="ALT_INIT"/>
    <property type="molecule type" value="Genomic_DNA"/>
</dbReference>
<dbReference type="RefSeq" id="WP_000695690.1">
    <property type="nucleotide sequence ID" value="NZ_CP051263.1"/>
</dbReference>
<dbReference type="SMR" id="P64615"/>
<dbReference type="STRING" id="199310.c3993"/>
<dbReference type="GeneID" id="86948102"/>
<dbReference type="KEGG" id="ecc:c3993"/>
<dbReference type="eggNOG" id="ENOG5031NM5">
    <property type="taxonomic scope" value="Bacteria"/>
</dbReference>
<dbReference type="HOGENOM" id="CLU_158602_1_2_6"/>
<dbReference type="Proteomes" id="UP000001410">
    <property type="component" value="Chromosome"/>
</dbReference>
<dbReference type="GO" id="GO:0042597">
    <property type="term" value="C:periplasmic space"/>
    <property type="evidence" value="ECO:0007669"/>
    <property type="project" value="UniProtKB-SubCell"/>
</dbReference>
<dbReference type="FunFam" id="3.30.1660.10:FF:000001">
    <property type="entry name" value="Multiple stress resistance protein BhsA"/>
    <property type="match status" value="1"/>
</dbReference>
<dbReference type="Gene3D" id="3.30.1660.10">
    <property type="entry name" value="Flavin-binding protein dodecin"/>
    <property type="match status" value="1"/>
</dbReference>
<dbReference type="InterPro" id="IPR051096">
    <property type="entry name" value="BhsA/McbA_stress_biofilm_assoc"/>
</dbReference>
<dbReference type="InterPro" id="IPR025543">
    <property type="entry name" value="Dodecin-like"/>
</dbReference>
<dbReference type="InterPro" id="IPR047775">
    <property type="entry name" value="Stress_YhcN-like"/>
</dbReference>
<dbReference type="InterPro" id="IPR036275">
    <property type="entry name" value="YdgH-like_sf"/>
</dbReference>
<dbReference type="InterPro" id="IPR010854">
    <property type="entry name" value="YdgH/BhsA/McbA-like_dom"/>
</dbReference>
<dbReference type="NCBIfam" id="NF033776">
    <property type="entry name" value="stress_YhcN"/>
    <property type="match status" value="1"/>
</dbReference>
<dbReference type="PANTHER" id="PTHR34156:SF5">
    <property type="entry name" value="OUTER MEMBRANE PROTEIN"/>
    <property type="match status" value="1"/>
</dbReference>
<dbReference type="PANTHER" id="PTHR34156">
    <property type="entry name" value="OUTER MEMBRANE PROTEIN-RELATED-RELATED"/>
    <property type="match status" value="1"/>
</dbReference>
<dbReference type="Pfam" id="PF07338">
    <property type="entry name" value="YdgH_BhsA-like"/>
    <property type="match status" value="1"/>
</dbReference>
<dbReference type="SUPFAM" id="SSF159871">
    <property type="entry name" value="YdgH-like"/>
    <property type="match status" value="1"/>
</dbReference>
<accession>P64615</accession>
<accession>P46477</accession>
<gene>
    <name type="primary">yhcN</name>
    <name type="ordered locus">c3993</name>
</gene>
<feature type="signal peptide" evidence="1">
    <location>
        <begin position="1"/>
        <end position="22"/>
    </location>
</feature>
<feature type="chain" id="PRO_0000013922" description="Uncharacterized protein YhcN">
    <location>
        <begin position="23"/>
        <end position="87"/>
    </location>
</feature>
<keyword id="KW-0574">Periplasm</keyword>
<keyword id="KW-1185">Reference proteome</keyword>
<keyword id="KW-0732">Signal</keyword>
<protein>
    <recommendedName>
        <fullName>Uncharacterized protein YhcN</fullName>
    </recommendedName>
</protein>
<organism>
    <name type="scientific">Escherichia coli O6:H1 (strain CFT073 / ATCC 700928 / UPEC)</name>
    <dbReference type="NCBI Taxonomy" id="199310"/>
    <lineage>
        <taxon>Bacteria</taxon>
        <taxon>Pseudomonadati</taxon>
        <taxon>Pseudomonadota</taxon>
        <taxon>Gammaproteobacteria</taxon>
        <taxon>Enterobacterales</taxon>
        <taxon>Enterobacteriaceae</taxon>
        <taxon>Escherichia</taxon>
    </lineage>
</organism>
<comment type="subcellular location">
    <subcellularLocation>
        <location evidence="2">Periplasm</location>
    </subcellularLocation>
</comment>
<comment type="similarity">
    <text evidence="2">Belongs to the BhsA/McbA family.</text>
</comment>
<comment type="sequence caution" evidence="2">
    <conflict type="erroneous initiation">
        <sequence resource="EMBL-CDS" id="AAN82433"/>
    </conflict>
</comment>